<comment type="function">
    <text evidence="1">The glycine cleavage system catalyzes the degradation of glycine. The H protein shuttles the methylamine group of glycine from the P protein to the T protein.</text>
</comment>
<comment type="cofactor">
    <cofactor evidence="1">
        <name>(R)-lipoate</name>
        <dbReference type="ChEBI" id="CHEBI:83088"/>
    </cofactor>
    <text evidence="1">Binds 1 lipoyl cofactor covalently.</text>
</comment>
<comment type="subunit">
    <text evidence="1">The glycine cleavage system is composed of four proteins: P, T, L and H.</text>
</comment>
<comment type="similarity">
    <text evidence="1">Belongs to the GcvH family.</text>
</comment>
<dbReference type="EMBL" id="CP000753">
    <property type="protein sequence ID" value="ABS09801.1"/>
    <property type="molecule type" value="Genomic_DNA"/>
</dbReference>
<dbReference type="RefSeq" id="WP_006080188.1">
    <property type="nucleotide sequence ID" value="NC_009665.1"/>
</dbReference>
<dbReference type="SMR" id="A6WSL2"/>
<dbReference type="GeneID" id="11773816"/>
<dbReference type="KEGG" id="sbm:Shew185_3676"/>
<dbReference type="HOGENOM" id="CLU_097408_2_1_6"/>
<dbReference type="GO" id="GO:0005829">
    <property type="term" value="C:cytosol"/>
    <property type="evidence" value="ECO:0007669"/>
    <property type="project" value="TreeGrafter"/>
</dbReference>
<dbReference type="GO" id="GO:0005960">
    <property type="term" value="C:glycine cleavage complex"/>
    <property type="evidence" value="ECO:0007669"/>
    <property type="project" value="InterPro"/>
</dbReference>
<dbReference type="GO" id="GO:0019464">
    <property type="term" value="P:glycine decarboxylation via glycine cleavage system"/>
    <property type="evidence" value="ECO:0007669"/>
    <property type="project" value="UniProtKB-UniRule"/>
</dbReference>
<dbReference type="CDD" id="cd06848">
    <property type="entry name" value="GCS_H"/>
    <property type="match status" value="1"/>
</dbReference>
<dbReference type="FunFam" id="2.40.50.100:FF:000011">
    <property type="entry name" value="Glycine cleavage system H protein"/>
    <property type="match status" value="1"/>
</dbReference>
<dbReference type="Gene3D" id="2.40.50.100">
    <property type="match status" value="1"/>
</dbReference>
<dbReference type="HAMAP" id="MF_00272">
    <property type="entry name" value="GcvH"/>
    <property type="match status" value="1"/>
</dbReference>
<dbReference type="InterPro" id="IPR003016">
    <property type="entry name" value="2-oxoA_DH_lipoyl-BS"/>
</dbReference>
<dbReference type="InterPro" id="IPR000089">
    <property type="entry name" value="Biotin_lipoyl"/>
</dbReference>
<dbReference type="InterPro" id="IPR002930">
    <property type="entry name" value="GCV_H"/>
</dbReference>
<dbReference type="InterPro" id="IPR033753">
    <property type="entry name" value="GCV_H/Fam206"/>
</dbReference>
<dbReference type="InterPro" id="IPR017453">
    <property type="entry name" value="GCV_H_sub"/>
</dbReference>
<dbReference type="InterPro" id="IPR011053">
    <property type="entry name" value="Single_hybrid_motif"/>
</dbReference>
<dbReference type="NCBIfam" id="TIGR00527">
    <property type="entry name" value="gcvH"/>
    <property type="match status" value="1"/>
</dbReference>
<dbReference type="NCBIfam" id="NF002270">
    <property type="entry name" value="PRK01202.1"/>
    <property type="match status" value="1"/>
</dbReference>
<dbReference type="PANTHER" id="PTHR11715">
    <property type="entry name" value="GLYCINE CLEAVAGE SYSTEM H PROTEIN"/>
    <property type="match status" value="1"/>
</dbReference>
<dbReference type="PANTHER" id="PTHR11715:SF3">
    <property type="entry name" value="GLYCINE CLEAVAGE SYSTEM H PROTEIN-RELATED"/>
    <property type="match status" value="1"/>
</dbReference>
<dbReference type="Pfam" id="PF01597">
    <property type="entry name" value="GCV_H"/>
    <property type="match status" value="1"/>
</dbReference>
<dbReference type="SUPFAM" id="SSF51230">
    <property type="entry name" value="Single hybrid motif"/>
    <property type="match status" value="1"/>
</dbReference>
<dbReference type="PROSITE" id="PS50968">
    <property type="entry name" value="BIOTINYL_LIPOYL"/>
    <property type="match status" value="1"/>
</dbReference>
<dbReference type="PROSITE" id="PS00189">
    <property type="entry name" value="LIPOYL"/>
    <property type="match status" value="1"/>
</dbReference>
<protein>
    <recommendedName>
        <fullName evidence="1">Glycine cleavage system H protein</fullName>
    </recommendedName>
</protein>
<sequence length="129" mass="13964">MSNIPTELKYASSHEWIRKEEDGSYTVGITEHAQELLGDMVFVELPEVGDTVTAGEDCAVAESVKAASDIYAPISGEVIAVNEALEDSPELVNSSAYGEGWFFRVMPSDESEVDALLDAEGYQAVIDED</sequence>
<proteinExistence type="inferred from homology"/>
<name>GCSH_SHEB8</name>
<evidence type="ECO:0000255" key="1">
    <source>
        <dbReference type="HAMAP-Rule" id="MF_00272"/>
    </source>
</evidence>
<evidence type="ECO:0000255" key="2">
    <source>
        <dbReference type="PROSITE-ProRule" id="PRU01066"/>
    </source>
</evidence>
<accession>A6WSL2</accession>
<feature type="chain" id="PRO_1000022201" description="Glycine cleavage system H protein">
    <location>
        <begin position="1"/>
        <end position="129"/>
    </location>
</feature>
<feature type="domain" description="Lipoyl-binding" evidence="2">
    <location>
        <begin position="24"/>
        <end position="106"/>
    </location>
</feature>
<feature type="modified residue" description="N6-lipoyllysine" evidence="1">
    <location>
        <position position="65"/>
    </location>
</feature>
<gene>
    <name evidence="1" type="primary">gcvH</name>
    <name type="ordered locus">Shew185_3676</name>
</gene>
<keyword id="KW-0450">Lipoyl</keyword>
<reference key="1">
    <citation type="submission" date="2007-07" db="EMBL/GenBank/DDBJ databases">
        <title>Complete sequence of chromosome of Shewanella baltica OS185.</title>
        <authorList>
            <consortium name="US DOE Joint Genome Institute"/>
            <person name="Copeland A."/>
            <person name="Lucas S."/>
            <person name="Lapidus A."/>
            <person name="Barry K."/>
            <person name="Glavina del Rio T."/>
            <person name="Dalin E."/>
            <person name="Tice H."/>
            <person name="Pitluck S."/>
            <person name="Sims D."/>
            <person name="Brettin T."/>
            <person name="Bruce D."/>
            <person name="Detter J.C."/>
            <person name="Han C."/>
            <person name="Schmutz J."/>
            <person name="Larimer F."/>
            <person name="Land M."/>
            <person name="Hauser L."/>
            <person name="Kyrpides N."/>
            <person name="Mikhailova N."/>
            <person name="Brettar I."/>
            <person name="Rodrigues J."/>
            <person name="Konstantinidis K."/>
            <person name="Tiedje J."/>
            <person name="Richardson P."/>
        </authorList>
    </citation>
    <scope>NUCLEOTIDE SEQUENCE [LARGE SCALE GENOMIC DNA]</scope>
    <source>
        <strain>OS185</strain>
    </source>
</reference>
<organism>
    <name type="scientific">Shewanella baltica (strain OS185)</name>
    <dbReference type="NCBI Taxonomy" id="402882"/>
    <lineage>
        <taxon>Bacteria</taxon>
        <taxon>Pseudomonadati</taxon>
        <taxon>Pseudomonadota</taxon>
        <taxon>Gammaproteobacteria</taxon>
        <taxon>Alteromonadales</taxon>
        <taxon>Shewanellaceae</taxon>
        <taxon>Shewanella</taxon>
    </lineage>
</organism>